<dbReference type="EMBL" id="AB031041">
    <property type="protein sequence ID" value="BAA83422.1"/>
    <property type="molecule type" value="mRNA"/>
</dbReference>
<dbReference type="EMBL" id="AB031042">
    <property type="protein sequence ID" value="BAA83423.1"/>
    <property type="molecule type" value="mRNA"/>
</dbReference>
<dbReference type="EMBL" id="AK126982">
    <property type="status" value="NOT_ANNOTATED_CDS"/>
    <property type="molecule type" value="mRNA"/>
</dbReference>
<dbReference type="EMBL" id="AK289827">
    <property type="protein sequence ID" value="BAF82516.1"/>
    <property type="molecule type" value="mRNA"/>
</dbReference>
<dbReference type="EMBL" id="AK297175">
    <property type="protein sequence ID" value="BAH12516.1"/>
    <property type="molecule type" value="mRNA"/>
</dbReference>
<dbReference type="EMBL" id="AK299709">
    <property type="protein sequence ID" value="BAH13108.1"/>
    <property type="molecule type" value="mRNA"/>
</dbReference>
<dbReference type="EMBL" id="AK313808">
    <property type="protein sequence ID" value="BAG36544.1"/>
    <property type="molecule type" value="mRNA"/>
</dbReference>
<dbReference type="EMBL" id="AL162424">
    <property type="status" value="NOT_ANNOTATED_CDS"/>
    <property type="molecule type" value="Genomic_DNA"/>
</dbReference>
<dbReference type="EMBL" id="CH471090">
    <property type="protein sequence ID" value="EAW87515.1"/>
    <property type="molecule type" value="Genomic_DNA"/>
</dbReference>
<dbReference type="EMBL" id="CH471090">
    <property type="protein sequence ID" value="EAW87516.1"/>
    <property type="molecule type" value="Genomic_DNA"/>
</dbReference>
<dbReference type="EMBL" id="AL136570">
    <property type="protein sequence ID" value="CAB66505.1"/>
    <property type="status" value="ALT_INIT"/>
    <property type="molecule type" value="mRNA"/>
</dbReference>
<dbReference type="EMBL" id="BC103936">
    <property type="protein sequence ID" value="AAI03937.1"/>
    <property type="status" value="ALT_INIT"/>
    <property type="molecule type" value="mRNA"/>
</dbReference>
<dbReference type="EMBL" id="BC103937">
    <property type="protein sequence ID" value="AAI03938.1"/>
    <property type="status" value="ALT_INIT"/>
    <property type="molecule type" value="mRNA"/>
</dbReference>
<dbReference type="CCDS" id="CCDS56583.1">
    <molecule id="Q9UPM6-1"/>
</dbReference>
<dbReference type="CCDS" id="CCDS56584.1">
    <molecule id="Q9UPM6-5"/>
</dbReference>
<dbReference type="CCDS" id="CCDS59144.1">
    <molecule id="Q9UPM6-6"/>
</dbReference>
<dbReference type="CCDS" id="CCDS6837.2">
    <molecule id="Q9UPM6-4"/>
</dbReference>
<dbReference type="CCDS" id="CCDS6838.2">
    <molecule id="Q9UPM6-3"/>
</dbReference>
<dbReference type="CCDS" id="CCDS87683.1">
    <molecule id="Q9UPM6-2"/>
</dbReference>
<dbReference type="PIR" id="T46907">
    <property type="entry name" value="T46907"/>
</dbReference>
<dbReference type="RefSeq" id="NP_001229262.1">
    <molecule id="Q9UPM6-5"/>
    <property type="nucleotide sequence ID" value="NM_001242333.2"/>
</dbReference>
<dbReference type="RefSeq" id="NP_001229263.1">
    <molecule id="Q9UPM6-1"/>
    <property type="nucleotide sequence ID" value="NM_001242334.2"/>
</dbReference>
<dbReference type="RefSeq" id="NP_001229264.1">
    <molecule id="Q9UPM6-6"/>
    <property type="nucleotide sequence ID" value="NM_001242335.2"/>
</dbReference>
<dbReference type="RefSeq" id="NP_001335119.1">
    <molecule id="Q9UPM6-2"/>
    <property type="nucleotide sequence ID" value="NM_001348190.2"/>
</dbReference>
<dbReference type="RefSeq" id="NP_055183.2">
    <molecule id="Q9UPM6-3"/>
    <property type="nucleotide sequence ID" value="NM_014368.5"/>
</dbReference>
<dbReference type="RefSeq" id="NP_954629.2">
    <molecule id="Q9UPM6-4"/>
    <property type="nucleotide sequence ID" value="NM_199160.4"/>
</dbReference>
<dbReference type="SMR" id="Q9UPM6"/>
<dbReference type="BioGRID" id="117692">
    <property type="interactions" value="57"/>
</dbReference>
<dbReference type="FunCoup" id="Q9UPM6">
    <property type="interactions" value="1292"/>
</dbReference>
<dbReference type="IntAct" id="Q9UPM6">
    <property type="interactions" value="64"/>
</dbReference>
<dbReference type="STRING" id="9606.ENSP00000377854"/>
<dbReference type="GlyGen" id="Q9UPM6">
    <property type="glycosylation" value="1 site"/>
</dbReference>
<dbReference type="iPTMnet" id="Q9UPM6"/>
<dbReference type="PhosphoSitePlus" id="Q9UPM6"/>
<dbReference type="BioMuta" id="LHX6"/>
<dbReference type="DMDM" id="90185239"/>
<dbReference type="MassIVE" id="Q9UPM6"/>
<dbReference type="PaxDb" id="9606-ENSP00000377854"/>
<dbReference type="PeptideAtlas" id="Q9UPM6"/>
<dbReference type="ProteomicsDB" id="85374">
    <molecule id="Q9UPM6-1"/>
</dbReference>
<dbReference type="ProteomicsDB" id="85375">
    <molecule id="Q9UPM6-2"/>
</dbReference>
<dbReference type="ProteomicsDB" id="85376">
    <molecule id="Q9UPM6-3"/>
</dbReference>
<dbReference type="ProteomicsDB" id="85377">
    <molecule id="Q9UPM6-4"/>
</dbReference>
<dbReference type="ProteomicsDB" id="85378">
    <molecule id="Q9UPM6-5"/>
</dbReference>
<dbReference type="Antibodypedia" id="16061">
    <property type="antibodies" value="328 antibodies from 34 providers"/>
</dbReference>
<dbReference type="DNASU" id="26468"/>
<dbReference type="Ensembl" id="ENST00000340587.7">
    <molecule id="Q9UPM6-4"/>
    <property type="protein sequence ID" value="ENSP00000340137.3"/>
    <property type="gene ID" value="ENSG00000106852.16"/>
</dbReference>
<dbReference type="Ensembl" id="ENST00000373754.6">
    <molecule id="Q9UPM6-2"/>
    <property type="protein sequence ID" value="ENSP00000362859.2"/>
    <property type="gene ID" value="ENSG00000106852.16"/>
</dbReference>
<dbReference type="Ensembl" id="ENST00000373755.6">
    <molecule id="Q9UPM6-1"/>
    <property type="protein sequence ID" value="ENSP00000362860.2"/>
    <property type="gene ID" value="ENSG00000106852.16"/>
</dbReference>
<dbReference type="Ensembl" id="ENST00000394319.9">
    <molecule id="Q9UPM6-3"/>
    <property type="protein sequence ID" value="ENSP00000377854.4"/>
    <property type="gene ID" value="ENSG00000106852.16"/>
</dbReference>
<dbReference type="Ensembl" id="ENST00000541397.2">
    <molecule id="Q9UPM6-5"/>
    <property type="protein sequence ID" value="ENSP00000441464.2"/>
    <property type="gene ID" value="ENSG00000106852.16"/>
</dbReference>
<dbReference type="Ensembl" id="ENST00000559895.5">
    <molecule id="Q9UPM6-6"/>
    <property type="protein sequence ID" value="ENSP00000475927.1"/>
    <property type="gene ID" value="ENSG00000106852.16"/>
</dbReference>
<dbReference type="GeneID" id="26468"/>
<dbReference type="KEGG" id="hsa:26468"/>
<dbReference type="MANE-Select" id="ENST00000394319.9">
    <molecule id="Q9UPM6-3"/>
    <property type="protein sequence ID" value="ENSP00000377854.4"/>
    <property type="RefSeq nucleotide sequence ID" value="NM_014368.5"/>
    <property type="RefSeq protein sequence ID" value="NP_055183.2"/>
</dbReference>
<dbReference type="UCSC" id="uc004blx.5">
    <molecule id="Q9UPM6-1"/>
    <property type="organism name" value="human"/>
</dbReference>
<dbReference type="AGR" id="HGNC:21735"/>
<dbReference type="CTD" id="26468"/>
<dbReference type="DisGeNET" id="26468"/>
<dbReference type="GeneCards" id="LHX6"/>
<dbReference type="HGNC" id="HGNC:21735">
    <property type="gene designation" value="LHX6"/>
</dbReference>
<dbReference type="HPA" id="ENSG00000106852">
    <property type="expression patterns" value="Tissue enhanced (adipose tissue, brain)"/>
</dbReference>
<dbReference type="MIM" id="608215">
    <property type="type" value="gene"/>
</dbReference>
<dbReference type="neXtProt" id="NX_Q9UPM6"/>
<dbReference type="OpenTargets" id="ENSG00000106852"/>
<dbReference type="PharmGKB" id="PA134949308"/>
<dbReference type="VEuPathDB" id="HostDB:ENSG00000106852"/>
<dbReference type="eggNOG" id="KOG0490">
    <property type="taxonomic scope" value="Eukaryota"/>
</dbReference>
<dbReference type="GeneTree" id="ENSGT00940000156868"/>
<dbReference type="HOGENOM" id="CLU_027802_1_0_1"/>
<dbReference type="InParanoid" id="Q9UPM6"/>
<dbReference type="OMA" id="HENCAAP"/>
<dbReference type="OrthoDB" id="125004at2759"/>
<dbReference type="PAN-GO" id="Q9UPM6">
    <property type="GO annotations" value="6 GO annotations based on evolutionary models"/>
</dbReference>
<dbReference type="PhylomeDB" id="Q9UPM6"/>
<dbReference type="TreeFam" id="TF315442"/>
<dbReference type="PathwayCommons" id="Q9UPM6"/>
<dbReference type="SignaLink" id="Q9UPM6"/>
<dbReference type="BioGRID-ORCS" id="26468">
    <property type="hits" value="10 hits in 1177 CRISPR screens"/>
</dbReference>
<dbReference type="ChiTaRS" id="LHX6">
    <property type="organism name" value="human"/>
</dbReference>
<dbReference type="GeneWiki" id="LHX6"/>
<dbReference type="GenomeRNAi" id="26468"/>
<dbReference type="Pharos" id="Q9UPM6">
    <property type="development level" value="Tbio"/>
</dbReference>
<dbReference type="PRO" id="PR:Q9UPM6"/>
<dbReference type="Proteomes" id="UP000005640">
    <property type="component" value="Chromosome 9"/>
</dbReference>
<dbReference type="RNAct" id="Q9UPM6">
    <property type="molecule type" value="protein"/>
</dbReference>
<dbReference type="Bgee" id="ENSG00000106852">
    <property type="expression patterns" value="Expressed in primordial germ cell in gonad and 132 other cell types or tissues"/>
</dbReference>
<dbReference type="ExpressionAtlas" id="Q9UPM6">
    <property type="expression patterns" value="baseline and differential"/>
</dbReference>
<dbReference type="GO" id="GO:0000785">
    <property type="term" value="C:chromatin"/>
    <property type="evidence" value="ECO:0000247"/>
    <property type="project" value="NTNU_SB"/>
</dbReference>
<dbReference type="GO" id="GO:0005634">
    <property type="term" value="C:nucleus"/>
    <property type="evidence" value="ECO:0000314"/>
    <property type="project" value="LIFEdb"/>
</dbReference>
<dbReference type="GO" id="GO:0003700">
    <property type="term" value="F:DNA-binding transcription factor activity"/>
    <property type="evidence" value="ECO:0000303"/>
    <property type="project" value="UniProtKB"/>
</dbReference>
<dbReference type="GO" id="GO:0000981">
    <property type="term" value="F:DNA-binding transcription factor activity, RNA polymerase II-specific"/>
    <property type="evidence" value="ECO:0000247"/>
    <property type="project" value="NTNU_SB"/>
</dbReference>
<dbReference type="GO" id="GO:0046872">
    <property type="term" value="F:metal ion binding"/>
    <property type="evidence" value="ECO:0007669"/>
    <property type="project" value="UniProtKB-KW"/>
</dbReference>
<dbReference type="GO" id="GO:0000977">
    <property type="term" value="F:RNA polymerase II transcription regulatory region sequence-specific DNA binding"/>
    <property type="evidence" value="ECO:0000318"/>
    <property type="project" value="GO_Central"/>
</dbReference>
<dbReference type="GO" id="GO:1990837">
    <property type="term" value="F:sequence-specific double-stranded DNA binding"/>
    <property type="evidence" value="ECO:0000314"/>
    <property type="project" value="ARUK-UCL"/>
</dbReference>
<dbReference type="GO" id="GO:0048469">
    <property type="term" value="P:cell maturation"/>
    <property type="evidence" value="ECO:0000250"/>
    <property type="project" value="UniProtKB"/>
</dbReference>
<dbReference type="GO" id="GO:0021853">
    <property type="term" value="P:cerebral cortex GABAergic interneuron migration"/>
    <property type="evidence" value="ECO:0000250"/>
    <property type="project" value="UniProtKB"/>
</dbReference>
<dbReference type="GO" id="GO:0021799">
    <property type="term" value="P:cerebral cortex radially oriented cell migration"/>
    <property type="evidence" value="ECO:0000250"/>
    <property type="project" value="UniProtKB"/>
</dbReference>
<dbReference type="GO" id="GO:0021800">
    <property type="term" value="P:cerebral cortex tangential migration"/>
    <property type="evidence" value="ECO:0000250"/>
    <property type="project" value="UniProtKB"/>
</dbReference>
<dbReference type="GO" id="GO:0021884">
    <property type="term" value="P:forebrain neuron development"/>
    <property type="evidence" value="ECO:0000318"/>
    <property type="project" value="GO_Central"/>
</dbReference>
<dbReference type="GO" id="GO:0030182">
    <property type="term" value="P:neuron differentiation"/>
    <property type="evidence" value="ECO:0000318"/>
    <property type="project" value="GO_Central"/>
</dbReference>
<dbReference type="GO" id="GO:0006357">
    <property type="term" value="P:regulation of transcription by RNA polymerase II"/>
    <property type="evidence" value="ECO:0000318"/>
    <property type="project" value="GO_Central"/>
</dbReference>
<dbReference type="CDD" id="cd00086">
    <property type="entry name" value="homeodomain"/>
    <property type="match status" value="1"/>
</dbReference>
<dbReference type="CDD" id="cd09380">
    <property type="entry name" value="LIM1_Lhx6"/>
    <property type="match status" value="1"/>
</dbReference>
<dbReference type="CDD" id="cd09382">
    <property type="entry name" value="LIM2_Lhx6"/>
    <property type="match status" value="1"/>
</dbReference>
<dbReference type="FunFam" id="1.10.10.60:FF:000050">
    <property type="entry name" value="LIM homeobox 6"/>
    <property type="match status" value="1"/>
</dbReference>
<dbReference type="FunFam" id="2.10.110.10:FF:000023">
    <property type="entry name" value="LIM homeobox 6"/>
    <property type="match status" value="1"/>
</dbReference>
<dbReference type="FunFam" id="2.10.110.10:FF:000031">
    <property type="entry name" value="LIM homeobox 6, isoform CRA_b"/>
    <property type="match status" value="1"/>
</dbReference>
<dbReference type="Gene3D" id="2.10.110.10">
    <property type="entry name" value="Cysteine Rich Protein"/>
    <property type="match status" value="2"/>
</dbReference>
<dbReference type="Gene3D" id="1.10.10.60">
    <property type="entry name" value="Homeodomain-like"/>
    <property type="match status" value="1"/>
</dbReference>
<dbReference type="InterPro" id="IPR001356">
    <property type="entry name" value="HD"/>
</dbReference>
<dbReference type="InterPro" id="IPR017970">
    <property type="entry name" value="Homeobox_CS"/>
</dbReference>
<dbReference type="InterPro" id="IPR009057">
    <property type="entry name" value="Homeodomain-like_sf"/>
</dbReference>
<dbReference type="InterPro" id="IPR050453">
    <property type="entry name" value="LIM_Homeobox_TF"/>
</dbReference>
<dbReference type="InterPro" id="IPR001781">
    <property type="entry name" value="Znf_LIM"/>
</dbReference>
<dbReference type="PANTHER" id="PTHR24208">
    <property type="entry name" value="LIM/HOMEOBOX PROTEIN LHX"/>
    <property type="match status" value="1"/>
</dbReference>
<dbReference type="PANTHER" id="PTHR24208:SF121">
    <property type="entry name" value="LIM_HOMEOBOX PROTEIN LHX6"/>
    <property type="match status" value="1"/>
</dbReference>
<dbReference type="Pfam" id="PF00046">
    <property type="entry name" value="Homeodomain"/>
    <property type="match status" value="1"/>
</dbReference>
<dbReference type="Pfam" id="PF00412">
    <property type="entry name" value="LIM"/>
    <property type="match status" value="2"/>
</dbReference>
<dbReference type="SMART" id="SM00389">
    <property type="entry name" value="HOX"/>
    <property type="match status" value="1"/>
</dbReference>
<dbReference type="SMART" id="SM00132">
    <property type="entry name" value="LIM"/>
    <property type="match status" value="2"/>
</dbReference>
<dbReference type="SUPFAM" id="SSF57716">
    <property type="entry name" value="Glucocorticoid receptor-like (DNA-binding domain)"/>
    <property type="match status" value="2"/>
</dbReference>
<dbReference type="SUPFAM" id="SSF46689">
    <property type="entry name" value="Homeodomain-like"/>
    <property type="match status" value="1"/>
</dbReference>
<dbReference type="PROSITE" id="PS00027">
    <property type="entry name" value="HOMEOBOX_1"/>
    <property type="match status" value="1"/>
</dbReference>
<dbReference type="PROSITE" id="PS50071">
    <property type="entry name" value="HOMEOBOX_2"/>
    <property type="match status" value="1"/>
</dbReference>
<dbReference type="PROSITE" id="PS00478">
    <property type="entry name" value="LIM_DOMAIN_1"/>
    <property type="match status" value="2"/>
</dbReference>
<dbReference type="PROSITE" id="PS50023">
    <property type="entry name" value="LIM_DOMAIN_2"/>
    <property type="match status" value="2"/>
</dbReference>
<comment type="function">
    <text evidence="1">Probable transcription factor required for the expression of a subset of genes involved in interneurons migration and development. Functions in the specification of cortical interneuron subtypes and in the migration of GABAergic interneuron precursors from the subpallium to the cerebral cortex (By similarity).</text>
</comment>
<comment type="subunit">
    <text evidence="1">Interacts with LDB1 (via the LIM zinc-binding domains).</text>
</comment>
<comment type="interaction">
    <interactant intactId="EBI-10258746">
        <id>Q9UPM6</id>
    </interactant>
    <interactant intactId="EBI-640741">
        <id>P01023</id>
        <label>A2M</label>
    </interactant>
    <organismsDiffer>false</organismsDiffer>
    <experiments>3</experiments>
</comment>
<comment type="interaction">
    <interactant intactId="EBI-10258746">
        <id>Q9UPM6</id>
    </interactant>
    <interactant intactId="EBI-930964">
        <id>P54253</id>
        <label>ATXN1</label>
    </interactant>
    <organismsDiffer>false</organismsDiffer>
    <experiments>6</experiments>
</comment>
<comment type="interaction">
    <interactant intactId="EBI-10258746">
        <id>Q9UPM6</id>
    </interactant>
    <interactant intactId="EBI-946046">
        <id>P54252</id>
        <label>ATXN3</label>
    </interactant>
    <organismsDiffer>false</organismsDiffer>
    <experiments>3</experiments>
</comment>
<comment type="interaction">
    <interactant intactId="EBI-10258746">
        <id>Q9UPM6</id>
    </interactant>
    <interactant intactId="EBI-1642542">
        <id>Q99829</id>
        <label>CPNE1</label>
    </interactant>
    <organismsDiffer>false</organismsDiffer>
    <experiments>3</experiments>
</comment>
<comment type="interaction">
    <interactant intactId="EBI-10258746">
        <id>Q9UPM6</id>
    </interactant>
    <interactant intactId="EBI-6658203">
        <id>Q86YD7</id>
        <label>FAM90A1</label>
    </interactant>
    <organismsDiffer>false</organismsDiffer>
    <experiments>3</experiments>
</comment>
<comment type="interaction">
    <interactant intactId="EBI-10258746">
        <id>Q9UPM6</id>
    </interactant>
    <interactant intactId="EBI-11976617">
        <id>Q6QHK4</id>
        <label>FIGLA</label>
    </interactant>
    <organismsDiffer>false</organismsDiffer>
    <experiments>3</experiments>
</comment>
<comment type="interaction">
    <interactant intactId="EBI-10258746">
        <id>Q9UPM6</id>
    </interactant>
    <interactant intactId="EBI-747754">
        <id>P28799</id>
        <label>GRN</label>
    </interactant>
    <organismsDiffer>false</organismsDiffer>
    <experiments>3</experiments>
</comment>
<comment type="interaction">
    <interactant intactId="EBI-10258746">
        <id>Q9UPM6</id>
    </interactant>
    <interactant intactId="EBI-352682">
        <id>P04792</id>
        <label>HSPB1</label>
    </interactant>
    <organismsDiffer>false</organismsDiffer>
    <experiments>3</experiments>
</comment>
<comment type="interaction">
    <interactant intactId="EBI-10258746">
        <id>Q9UPM6</id>
    </interactant>
    <interactant intactId="EBI-466029">
        <id>P42858</id>
        <label>HTT</label>
    </interactant>
    <organismsDiffer>false</organismsDiffer>
    <experiments>12</experiments>
</comment>
<comment type="interaction">
    <interactant intactId="EBI-10258746">
        <id>Q9UPM6</id>
    </interactant>
    <interactant intactId="EBI-8472267">
        <id>P57682</id>
        <label>KLF3</label>
    </interactant>
    <organismsDiffer>false</organismsDiffer>
    <experiments>3</experiments>
</comment>
<comment type="interaction">
    <interactant intactId="EBI-10258746">
        <id>Q9UPM6</id>
    </interactant>
    <interactant intactId="EBI-677177">
        <id>Q86U70</id>
        <label>LDB1</label>
    </interactant>
    <organismsDiffer>false</organismsDiffer>
    <experiments>7</experiments>
</comment>
<comment type="interaction">
    <interactant intactId="EBI-10258746">
        <id>Q9UPM6</id>
    </interactant>
    <interactant intactId="EBI-11979761">
        <id>Q86U70-2</id>
        <label>LDB1</label>
    </interactant>
    <organismsDiffer>false</organismsDiffer>
    <experiments>5</experiments>
</comment>
<comment type="interaction">
    <interactant intactId="EBI-10258746">
        <id>Q9UPM6</id>
    </interactant>
    <interactant intactId="EBI-11742836">
        <id>Q16656-4</id>
        <label>NRF1</label>
    </interactant>
    <organismsDiffer>false</organismsDiffer>
    <experiments>3</experiments>
</comment>
<comment type="interaction">
    <interactant intactId="EBI-10258746">
        <id>Q9UPM6</id>
    </interactant>
    <interactant intactId="EBI-721853">
        <id>O14832</id>
        <label>PHYH</label>
    </interactant>
    <organismsDiffer>false</organismsDiffer>
    <experiments>3</experiments>
</comment>
<comment type="interaction">
    <interactant intactId="EBI-10258746">
        <id>Q9UPM6</id>
    </interactant>
    <interactant intactId="EBI-50433196">
        <id>A0A6Q8PF08</id>
        <label>PMP22</label>
    </interactant>
    <organismsDiffer>false</organismsDiffer>
    <experiments>3</experiments>
</comment>
<comment type="interaction">
    <interactant intactId="EBI-10258746">
        <id>Q9UPM6</id>
    </interactant>
    <interactant intactId="EBI-396669">
        <id>Q9Y3C5</id>
        <label>RNF11</label>
    </interactant>
    <organismsDiffer>false</organismsDiffer>
    <experiments>3</experiments>
</comment>
<comment type="interaction">
    <interactant intactId="EBI-10258746">
        <id>Q9UPM6</id>
    </interactant>
    <interactant intactId="EBI-6422642">
        <id>Q01974</id>
        <label>ROR2</label>
    </interactant>
    <organismsDiffer>false</organismsDiffer>
    <experiments>3</experiments>
</comment>
<comment type="interaction">
    <interactant intactId="EBI-10258746">
        <id>Q9UPM6</id>
    </interactant>
    <interactant intactId="EBI-985879">
        <id>P37840</id>
        <label>SNCA</label>
    </interactant>
    <organismsDiffer>false</organismsDiffer>
    <experiments>3</experiments>
</comment>
<comment type="interaction">
    <interactant intactId="EBI-10258746">
        <id>Q9UPM6</id>
    </interactant>
    <interactant intactId="EBI-720609">
        <id>O76024</id>
        <label>WFS1</label>
    </interactant>
    <organismsDiffer>false</organismsDiffer>
    <experiments>3</experiments>
</comment>
<comment type="interaction">
    <interactant intactId="EBI-10258746">
        <id>Q9UPM6</id>
    </interactant>
    <interactant intactId="EBI-10746567">
        <id>P52744</id>
        <label>ZNF138</label>
    </interactant>
    <organismsDiffer>false</organismsDiffer>
    <experiments>3</experiments>
</comment>
<comment type="interaction">
    <interactant intactId="EBI-10258746">
        <id>Q9UPM6</id>
    </interactant>
    <interactant intactId="EBI-7254550">
        <id>P36508</id>
        <label>ZNF76</label>
    </interactant>
    <organismsDiffer>false</organismsDiffer>
    <experiments>3</experiments>
</comment>
<comment type="subcellular location">
    <subcellularLocation>
        <location evidence="7">Nucleus</location>
    </subcellularLocation>
</comment>
<comment type="alternative products">
    <event type="alternative splicing"/>
    <isoform>
        <id>Q9UPM6-1</id>
        <name>1</name>
        <name>Lhx6.1a</name>
        <sequence type="displayed"/>
    </isoform>
    <isoform>
        <id>Q9UPM6-2</id>
        <name>2</name>
        <name>Lhx6.1b</name>
        <sequence type="described" ref="VSP_003109"/>
    </isoform>
    <isoform>
        <id>Q9UPM6-3</id>
        <name>3</name>
        <sequence type="described" ref="VSP_037745"/>
    </isoform>
    <isoform>
        <id>Q9UPM6-4</id>
        <name>4</name>
        <sequence type="described" ref="VSP_037745 VSP_003109"/>
    </isoform>
    <isoform>
        <id>Q9UPM6-5</id>
        <name>5</name>
        <sequence type="described" ref="VSP_042073 VSP_003109"/>
    </isoform>
    <isoform>
        <id>Q9UPM6-6</id>
        <name>6</name>
        <sequence type="described" ref="VSP_046043"/>
    </isoform>
</comment>
<comment type="sequence caution" evidence="7">
    <conflict type="erroneous initiation">
        <sequence resource="EMBL-CDS" id="AAI03937"/>
    </conflict>
    <text>Truncated N-terminus.</text>
</comment>
<comment type="sequence caution" evidence="7">
    <conflict type="erroneous initiation">
        <sequence resource="EMBL-CDS" id="AAI03938"/>
    </conflict>
    <text>Truncated N-terminus.</text>
</comment>
<comment type="sequence caution" evidence="7">
    <conflict type="erroneous initiation">
        <sequence resource="EMBL-CDS" id="CAB66505"/>
    </conflict>
    <text>Truncated N-terminus.</text>
</comment>
<feature type="chain" id="PRO_0000075794" description="LIM/homeobox protein Lhx6">
    <location>
        <begin position="1"/>
        <end position="363"/>
    </location>
</feature>
<feature type="domain" description="LIM zinc-binding 1" evidence="3">
    <location>
        <begin position="70"/>
        <end position="122"/>
    </location>
</feature>
<feature type="domain" description="LIM zinc-binding 2" evidence="3">
    <location>
        <begin position="131"/>
        <end position="184"/>
    </location>
</feature>
<feature type="DNA-binding region" description="Homeobox" evidence="2">
    <location>
        <begin position="219"/>
        <end position="278"/>
    </location>
</feature>
<feature type="region of interest" description="Disordered" evidence="4">
    <location>
        <begin position="19"/>
        <end position="53"/>
    </location>
</feature>
<feature type="region of interest" description="Required for interaction with LDB1" evidence="1">
    <location>
        <begin position="55"/>
        <end position="194"/>
    </location>
</feature>
<feature type="region of interest" description="Disordered" evidence="4">
    <location>
        <begin position="203"/>
        <end position="224"/>
    </location>
</feature>
<feature type="region of interest" description="Disordered" evidence="4">
    <location>
        <begin position="273"/>
        <end position="297"/>
    </location>
</feature>
<feature type="compositionally biased region" description="Low complexity" evidence="4">
    <location>
        <begin position="42"/>
        <end position="53"/>
    </location>
</feature>
<feature type="compositionally biased region" description="Pro residues" evidence="4">
    <location>
        <begin position="281"/>
        <end position="292"/>
    </location>
</feature>
<feature type="splice variant" id="VSP_046043" description="In isoform 6." evidence="6">
    <location>
        <begin position="1"/>
        <end position="187"/>
    </location>
</feature>
<feature type="splice variant" id="VSP_037745" description="In isoform 3 and isoform 4." evidence="6">
    <original>M</original>
    <variation>MYWKHENAAPALPEGCRLPAEGGPATDQVM</variation>
    <location>
        <position position="1"/>
    </location>
</feature>
<feature type="splice variant" id="VSP_042073" description="In isoform 5." evidence="6">
    <original>M</original>
    <variation>MRRGLCRRSAENPDAGPVM</variation>
    <location>
        <position position="1"/>
    </location>
</feature>
<feature type="splice variant" id="VSP_003109" description="In isoform 2, isoform 4 and isoform 5." evidence="5 6">
    <original>QVQCGQVHCRLPYTAPPVHLKADMDGPLSNRGEKVILFQY</original>
    <variation>HPFSVLTLPALPHLPVGAPQLPLSR</variation>
    <location>
        <begin position="324"/>
        <end position="363"/>
    </location>
</feature>
<feature type="sequence conflict" description="In Ref. 1; BAA83422/BAA83423." evidence="7" ref="1">
    <original>E</original>
    <variation>K</variation>
    <location>
        <position position="16"/>
    </location>
</feature>
<feature type="sequence conflict" description="In Ref. 1; BAA83423." evidence="7" ref="1">
    <original>L</original>
    <variation>F</variation>
    <location sequence="Q9UPM6-2">
        <position position="346"/>
    </location>
</feature>
<evidence type="ECO:0000250" key="1"/>
<evidence type="ECO:0000255" key="2">
    <source>
        <dbReference type="PROSITE-ProRule" id="PRU00108"/>
    </source>
</evidence>
<evidence type="ECO:0000255" key="3">
    <source>
        <dbReference type="PROSITE-ProRule" id="PRU00125"/>
    </source>
</evidence>
<evidence type="ECO:0000256" key="4">
    <source>
        <dbReference type="SAM" id="MobiDB-lite"/>
    </source>
</evidence>
<evidence type="ECO:0000303" key="5">
    <source>
    </source>
</evidence>
<evidence type="ECO:0000303" key="6">
    <source>
    </source>
</evidence>
<evidence type="ECO:0000305" key="7"/>
<sequence length="363" mass="40045">MAQPGSGCKATTRCLEGTAPPAMAQSDAEALAGALDKDEGQASPCTPSTPSVCSPPSAASSVPSAGKNICSSCGLEILDRYLLKVNNLIWHVRCLECSVCRTSLRQQNSCYIKNKEIFCKMDYFSRFGTKCARCGRQIYASDWVRRARGNAYHLACFACFSCKRQLSTGEEFGLVEEKVLCRIHYDTMIENLKRAAENGNGLTLEGAVPSEQDSQPKPAKRARTSFTAEQLQVMQAQFAQDNNPDAQTLQKLADMTGLSRRVIQVWFQNCRARHKKHTPQHPVPPSGAPPSRLPSALSDDIHYTPFSSPERARMVTLHGYIESQVQCGQVHCRLPYTAPPVHLKADMDGPLSNRGEKVILFQY</sequence>
<accession>Q9UPM6</accession>
<accession>A6PVQ1</accession>
<accession>A6PVQ2</accession>
<accession>A8K1B2</accession>
<accession>B7Z4D0</accession>
<accession>H0YN76</accession>
<accession>Q5T7S7</accession>
<accession>Q5T7S8</accession>
<accession>Q9NTK3</accession>
<accession>Q9UPM5</accession>
<reference key="1">
    <citation type="journal article" date="1999" name="J. Biochem.">
        <title>A brain region-specific gene product Lhx6.1 interacts with Ldb1 through tandem LIM-domains.</title>
        <authorList>
            <person name="Kimura N."/>
            <person name="Ueno M."/>
            <person name="Nakashima K."/>
            <person name="Taga T."/>
        </authorList>
    </citation>
    <scope>NUCLEOTIDE SEQUENCE [MRNA] (ISOFORMS 1 AND 2)</scope>
</reference>
<reference key="2">
    <citation type="journal article" date="2004" name="Nat. Genet.">
        <title>Complete sequencing and characterization of 21,243 full-length human cDNAs.</title>
        <authorList>
            <person name="Ota T."/>
            <person name="Suzuki Y."/>
            <person name="Nishikawa T."/>
            <person name="Otsuki T."/>
            <person name="Sugiyama T."/>
            <person name="Irie R."/>
            <person name="Wakamatsu A."/>
            <person name="Hayashi K."/>
            <person name="Sato H."/>
            <person name="Nagai K."/>
            <person name="Kimura K."/>
            <person name="Makita H."/>
            <person name="Sekine M."/>
            <person name="Obayashi M."/>
            <person name="Nishi T."/>
            <person name="Shibahara T."/>
            <person name="Tanaka T."/>
            <person name="Ishii S."/>
            <person name="Yamamoto J."/>
            <person name="Saito K."/>
            <person name="Kawai Y."/>
            <person name="Isono Y."/>
            <person name="Nakamura Y."/>
            <person name="Nagahari K."/>
            <person name="Murakami K."/>
            <person name="Yasuda T."/>
            <person name="Iwayanagi T."/>
            <person name="Wagatsuma M."/>
            <person name="Shiratori A."/>
            <person name="Sudo H."/>
            <person name="Hosoiri T."/>
            <person name="Kaku Y."/>
            <person name="Kodaira H."/>
            <person name="Kondo H."/>
            <person name="Sugawara M."/>
            <person name="Takahashi M."/>
            <person name="Kanda K."/>
            <person name="Yokoi T."/>
            <person name="Furuya T."/>
            <person name="Kikkawa E."/>
            <person name="Omura Y."/>
            <person name="Abe K."/>
            <person name="Kamihara K."/>
            <person name="Katsuta N."/>
            <person name="Sato K."/>
            <person name="Tanikawa M."/>
            <person name="Yamazaki M."/>
            <person name="Ninomiya K."/>
            <person name="Ishibashi T."/>
            <person name="Yamashita H."/>
            <person name="Murakawa K."/>
            <person name="Fujimori K."/>
            <person name="Tanai H."/>
            <person name="Kimata M."/>
            <person name="Watanabe M."/>
            <person name="Hiraoka S."/>
            <person name="Chiba Y."/>
            <person name="Ishida S."/>
            <person name="Ono Y."/>
            <person name="Takiguchi S."/>
            <person name="Watanabe S."/>
            <person name="Yosida M."/>
            <person name="Hotuta T."/>
            <person name="Kusano J."/>
            <person name="Kanehori K."/>
            <person name="Takahashi-Fujii A."/>
            <person name="Hara H."/>
            <person name="Tanase T.-O."/>
            <person name="Nomura Y."/>
            <person name="Togiya S."/>
            <person name="Komai F."/>
            <person name="Hara R."/>
            <person name="Takeuchi K."/>
            <person name="Arita M."/>
            <person name="Imose N."/>
            <person name="Musashino K."/>
            <person name="Yuuki H."/>
            <person name="Oshima A."/>
            <person name="Sasaki N."/>
            <person name="Aotsuka S."/>
            <person name="Yoshikawa Y."/>
            <person name="Matsunawa H."/>
            <person name="Ichihara T."/>
            <person name="Shiohata N."/>
            <person name="Sano S."/>
            <person name="Moriya S."/>
            <person name="Momiyama H."/>
            <person name="Satoh N."/>
            <person name="Takami S."/>
            <person name="Terashima Y."/>
            <person name="Suzuki O."/>
            <person name="Nakagawa S."/>
            <person name="Senoh A."/>
            <person name="Mizoguchi H."/>
            <person name="Goto Y."/>
            <person name="Shimizu F."/>
            <person name="Wakebe H."/>
            <person name="Hishigaki H."/>
            <person name="Watanabe T."/>
            <person name="Sugiyama A."/>
            <person name="Takemoto M."/>
            <person name="Kawakami B."/>
            <person name="Yamazaki M."/>
            <person name="Watanabe K."/>
            <person name="Kumagai A."/>
            <person name="Itakura S."/>
            <person name="Fukuzumi Y."/>
            <person name="Fujimori Y."/>
            <person name="Komiyama M."/>
            <person name="Tashiro H."/>
            <person name="Tanigami A."/>
            <person name="Fujiwara T."/>
            <person name="Ono T."/>
            <person name="Yamada K."/>
            <person name="Fujii Y."/>
            <person name="Ozaki K."/>
            <person name="Hirao M."/>
            <person name="Ohmori Y."/>
            <person name="Kawabata A."/>
            <person name="Hikiji T."/>
            <person name="Kobatake N."/>
            <person name="Inagaki H."/>
            <person name="Ikema Y."/>
            <person name="Okamoto S."/>
            <person name="Okitani R."/>
            <person name="Kawakami T."/>
            <person name="Noguchi S."/>
            <person name="Itoh T."/>
            <person name="Shigeta K."/>
            <person name="Senba T."/>
            <person name="Matsumura K."/>
            <person name="Nakajima Y."/>
            <person name="Mizuno T."/>
            <person name="Morinaga M."/>
            <person name="Sasaki M."/>
            <person name="Togashi T."/>
            <person name="Oyama M."/>
            <person name="Hata H."/>
            <person name="Watanabe M."/>
            <person name="Komatsu T."/>
            <person name="Mizushima-Sugano J."/>
            <person name="Satoh T."/>
            <person name="Shirai Y."/>
            <person name="Takahashi Y."/>
            <person name="Nakagawa K."/>
            <person name="Okumura K."/>
            <person name="Nagase T."/>
            <person name="Nomura N."/>
            <person name="Kikuchi H."/>
            <person name="Masuho Y."/>
            <person name="Yamashita R."/>
            <person name="Nakai K."/>
            <person name="Yada T."/>
            <person name="Nakamura Y."/>
            <person name="Ohara O."/>
            <person name="Isogai T."/>
            <person name="Sugano S."/>
        </authorList>
    </citation>
    <scope>NUCLEOTIDE SEQUENCE [LARGE SCALE MRNA] (ISOFORMS 1; 3; 5 AND 6)</scope>
    <source>
        <tissue>Brain</tissue>
        <tissue>Hippocampus</tissue>
    </source>
</reference>
<reference key="3">
    <citation type="journal article" date="2004" name="Nature">
        <title>DNA sequence and analysis of human chromosome 9.</title>
        <authorList>
            <person name="Humphray S.J."/>
            <person name="Oliver K."/>
            <person name="Hunt A.R."/>
            <person name="Plumb R.W."/>
            <person name="Loveland J.E."/>
            <person name="Howe K.L."/>
            <person name="Andrews T.D."/>
            <person name="Searle S."/>
            <person name="Hunt S.E."/>
            <person name="Scott C.E."/>
            <person name="Jones M.C."/>
            <person name="Ainscough R."/>
            <person name="Almeida J.P."/>
            <person name="Ambrose K.D."/>
            <person name="Ashwell R.I.S."/>
            <person name="Babbage A.K."/>
            <person name="Babbage S."/>
            <person name="Bagguley C.L."/>
            <person name="Bailey J."/>
            <person name="Banerjee R."/>
            <person name="Barker D.J."/>
            <person name="Barlow K.F."/>
            <person name="Bates K."/>
            <person name="Beasley H."/>
            <person name="Beasley O."/>
            <person name="Bird C.P."/>
            <person name="Bray-Allen S."/>
            <person name="Brown A.J."/>
            <person name="Brown J.Y."/>
            <person name="Burford D."/>
            <person name="Burrill W."/>
            <person name="Burton J."/>
            <person name="Carder C."/>
            <person name="Carter N.P."/>
            <person name="Chapman J.C."/>
            <person name="Chen Y."/>
            <person name="Clarke G."/>
            <person name="Clark S.Y."/>
            <person name="Clee C.M."/>
            <person name="Clegg S."/>
            <person name="Collier R.E."/>
            <person name="Corby N."/>
            <person name="Crosier M."/>
            <person name="Cummings A.T."/>
            <person name="Davies J."/>
            <person name="Dhami P."/>
            <person name="Dunn M."/>
            <person name="Dutta I."/>
            <person name="Dyer L.W."/>
            <person name="Earthrowl M.E."/>
            <person name="Faulkner L."/>
            <person name="Fleming C.J."/>
            <person name="Frankish A."/>
            <person name="Frankland J.A."/>
            <person name="French L."/>
            <person name="Fricker D.G."/>
            <person name="Garner P."/>
            <person name="Garnett J."/>
            <person name="Ghori J."/>
            <person name="Gilbert J.G.R."/>
            <person name="Glison C."/>
            <person name="Grafham D.V."/>
            <person name="Gribble S."/>
            <person name="Griffiths C."/>
            <person name="Griffiths-Jones S."/>
            <person name="Grocock R."/>
            <person name="Guy J."/>
            <person name="Hall R.E."/>
            <person name="Hammond S."/>
            <person name="Harley J.L."/>
            <person name="Harrison E.S.I."/>
            <person name="Hart E.A."/>
            <person name="Heath P.D."/>
            <person name="Henderson C.D."/>
            <person name="Hopkins B.L."/>
            <person name="Howard P.J."/>
            <person name="Howden P.J."/>
            <person name="Huckle E."/>
            <person name="Johnson C."/>
            <person name="Johnson D."/>
            <person name="Joy A.A."/>
            <person name="Kay M."/>
            <person name="Keenan S."/>
            <person name="Kershaw J.K."/>
            <person name="Kimberley A.M."/>
            <person name="King A."/>
            <person name="Knights A."/>
            <person name="Laird G.K."/>
            <person name="Langford C."/>
            <person name="Lawlor S."/>
            <person name="Leongamornlert D.A."/>
            <person name="Leversha M."/>
            <person name="Lloyd C."/>
            <person name="Lloyd D.M."/>
            <person name="Lovell J."/>
            <person name="Martin S."/>
            <person name="Mashreghi-Mohammadi M."/>
            <person name="Matthews L."/>
            <person name="McLaren S."/>
            <person name="McLay K.E."/>
            <person name="McMurray A."/>
            <person name="Milne S."/>
            <person name="Nickerson T."/>
            <person name="Nisbett J."/>
            <person name="Nordsiek G."/>
            <person name="Pearce A.V."/>
            <person name="Peck A.I."/>
            <person name="Porter K.M."/>
            <person name="Pandian R."/>
            <person name="Pelan S."/>
            <person name="Phillimore B."/>
            <person name="Povey S."/>
            <person name="Ramsey Y."/>
            <person name="Rand V."/>
            <person name="Scharfe M."/>
            <person name="Sehra H.K."/>
            <person name="Shownkeen R."/>
            <person name="Sims S.K."/>
            <person name="Skuce C.D."/>
            <person name="Smith M."/>
            <person name="Steward C.A."/>
            <person name="Swarbreck D."/>
            <person name="Sycamore N."/>
            <person name="Tester J."/>
            <person name="Thorpe A."/>
            <person name="Tracey A."/>
            <person name="Tromans A."/>
            <person name="Thomas D.W."/>
            <person name="Wall M."/>
            <person name="Wallis J.M."/>
            <person name="West A.P."/>
            <person name="Whitehead S.L."/>
            <person name="Willey D.L."/>
            <person name="Williams S.A."/>
            <person name="Wilming L."/>
            <person name="Wray P.W."/>
            <person name="Young L."/>
            <person name="Ashurst J.L."/>
            <person name="Coulson A."/>
            <person name="Blocker H."/>
            <person name="Durbin R.M."/>
            <person name="Sulston J.E."/>
            <person name="Hubbard T."/>
            <person name="Jackson M.J."/>
            <person name="Bentley D.R."/>
            <person name="Beck S."/>
            <person name="Rogers J."/>
            <person name="Dunham I."/>
        </authorList>
    </citation>
    <scope>NUCLEOTIDE SEQUENCE [LARGE SCALE GENOMIC DNA]</scope>
</reference>
<reference key="4">
    <citation type="submission" date="2005-07" db="EMBL/GenBank/DDBJ databases">
        <authorList>
            <person name="Mural R.J."/>
            <person name="Istrail S."/>
            <person name="Sutton G.G."/>
            <person name="Florea L."/>
            <person name="Halpern A.L."/>
            <person name="Mobarry C.M."/>
            <person name="Lippert R."/>
            <person name="Walenz B."/>
            <person name="Shatkay H."/>
            <person name="Dew I."/>
            <person name="Miller J.R."/>
            <person name="Flanigan M.J."/>
            <person name="Edwards N.J."/>
            <person name="Bolanos R."/>
            <person name="Fasulo D."/>
            <person name="Halldorsson B.V."/>
            <person name="Hannenhalli S."/>
            <person name="Turner R."/>
            <person name="Yooseph S."/>
            <person name="Lu F."/>
            <person name="Nusskern D.R."/>
            <person name="Shue B.C."/>
            <person name="Zheng X.H."/>
            <person name="Zhong F."/>
            <person name="Delcher A.L."/>
            <person name="Huson D.H."/>
            <person name="Kravitz S.A."/>
            <person name="Mouchard L."/>
            <person name="Reinert K."/>
            <person name="Remington K.A."/>
            <person name="Clark A.G."/>
            <person name="Waterman M.S."/>
            <person name="Eichler E.E."/>
            <person name="Adams M.D."/>
            <person name="Hunkapiller M.W."/>
            <person name="Myers E.W."/>
            <person name="Venter J.C."/>
        </authorList>
    </citation>
    <scope>NUCLEOTIDE SEQUENCE [LARGE SCALE GENOMIC DNA]</scope>
</reference>
<reference key="5">
    <citation type="journal article" date="2001" name="Genome Res.">
        <title>Towards a catalog of human genes and proteins: sequencing and analysis of 500 novel complete protein coding human cDNAs.</title>
        <authorList>
            <person name="Wiemann S."/>
            <person name="Weil B."/>
            <person name="Wellenreuther R."/>
            <person name="Gassenhuber J."/>
            <person name="Glassl S."/>
            <person name="Ansorge W."/>
            <person name="Boecher M."/>
            <person name="Bloecker H."/>
            <person name="Bauersachs S."/>
            <person name="Blum H."/>
            <person name="Lauber J."/>
            <person name="Duesterhoeft A."/>
            <person name="Beyer A."/>
            <person name="Koehrer K."/>
            <person name="Strack N."/>
            <person name="Mewes H.-W."/>
            <person name="Ottenwaelder B."/>
            <person name="Obermaier B."/>
            <person name="Tampe J."/>
            <person name="Heubner D."/>
            <person name="Wambutt R."/>
            <person name="Korn B."/>
            <person name="Klein M."/>
            <person name="Poustka A."/>
        </authorList>
    </citation>
    <scope>PARTIAL NUCLEOTIDE SEQUENCE [LARGE SCALE MRNA] (ISOFORM 3)</scope>
    <source>
        <tissue>Amygdala</tissue>
    </source>
</reference>
<reference key="6">
    <citation type="journal article" date="2004" name="Genome Res.">
        <title>The status, quality, and expansion of the NIH full-length cDNA project: the Mammalian Gene Collection (MGC).</title>
        <authorList>
            <consortium name="The MGC Project Team"/>
        </authorList>
    </citation>
    <scope>PARTIAL NUCLEOTIDE SEQUENCE [LARGE SCALE MRNA] (ISOFORMS 3 AND 4)</scope>
</reference>
<gene>
    <name type="primary">LHX6</name>
    <name type="synonym">LHX6.1</name>
</gene>
<protein>
    <recommendedName>
        <fullName>LIM/homeobox protein Lhx6</fullName>
        <shortName>LIM homeobox protein 6</shortName>
    </recommendedName>
    <alternativeName>
        <fullName>LIM/homeobox protein Lhx6.1</fullName>
    </alternativeName>
</protein>
<name>LHX6_HUMAN</name>
<organism>
    <name type="scientific">Homo sapiens</name>
    <name type="common">Human</name>
    <dbReference type="NCBI Taxonomy" id="9606"/>
    <lineage>
        <taxon>Eukaryota</taxon>
        <taxon>Metazoa</taxon>
        <taxon>Chordata</taxon>
        <taxon>Craniata</taxon>
        <taxon>Vertebrata</taxon>
        <taxon>Euteleostomi</taxon>
        <taxon>Mammalia</taxon>
        <taxon>Eutheria</taxon>
        <taxon>Euarchontoglires</taxon>
        <taxon>Primates</taxon>
        <taxon>Haplorrhini</taxon>
        <taxon>Catarrhini</taxon>
        <taxon>Hominidae</taxon>
        <taxon>Homo</taxon>
    </lineage>
</organism>
<keyword id="KW-0025">Alternative splicing</keyword>
<keyword id="KW-0217">Developmental protein</keyword>
<keyword id="KW-0221">Differentiation</keyword>
<keyword id="KW-0238">DNA-binding</keyword>
<keyword id="KW-0371">Homeobox</keyword>
<keyword id="KW-0440">LIM domain</keyword>
<keyword id="KW-0479">Metal-binding</keyword>
<keyword id="KW-0524">Neurogenesis</keyword>
<keyword id="KW-0539">Nucleus</keyword>
<keyword id="KW-1185">Reference proteome</keyword>
<keyword id="KW-0677">Repeat</keyword>
<keyword id="KW-0804">Transcription</keyword>
<keyword id="KW-0805">Transcription regulation</keyword>
<keyword id="KW-0862">Zinc</keyword>
<proteinExistence type="evidence at protein level"/>